<gene>
    <name evidence="1" type="primary">yciB</name>
    <name type="ordered locus">YPA_1555</name>
</gene>
<reference key="1">
    <citation type="journal article" date="2006" name="J. Bacteriol.">
        <title>Complete genome sequence of Yersinia pestis strains Antiqua and Nepal516: evidence of gene reduction in an emerging pathogen.</title>
        <authorList>
            <person name="Chain P.S.G."/>
            <person name="Hu P."/>
            <person name="Malfatti S.A."/>
            <person name="Radnedge L."/>
            <person name="Larimer F."/>
            <person name="Vergez L.M."/>
            <person name="Worsham P."/>
            <person name="Chu M.C."/>
            <person name="Andersen G.L."/>
        </authorList>
    </citation>
    <scope>NUCLEOTIDE SEQUENCE [LARGE SCALE GENOMIC DNA]</scope>
    <source>
        <strain>Antiqua</strain>
    </source>
</reference>
<dbReference type="EMBL" id="CP000308">
    <property type="protein sequence ID" value="ABG13521.1"/>
    <property type="molecule type" value="Genomic_DNA"/>
</dbReference>
<dbReference type="RefSeq" id="WP_002210640.1">
    <property type="nucleotide sequence ID" value="NZ_CP009906.1"/>
</dbReference>
<dbReference type="KEGG" id="ypa:YPA_1555"/>
<dbReference type="Proteomes" id="UP000001971">
    <property type="component" value="Chromosome"/>
</dbReference>
<dbReference type="GO" id="GO:0005886">
    <property type="term" value="C:plasma membrane"/>
    <property type="evidence" value="ECO:0007669"/>
    <property type="project" value="UniProtKB-SubCell"/>
</dbReference>
<dbReference type="HAMAP" id="MF_00189">
    <property type="entry name" value="YciB"/>
    <property type="match status" value="1"/>
</dbReference>
<dbReference type="InterPro" id="IPR006008">
    <property type="entry name" value="YciB"/>
</dbReference>
<dbReference type="NCBIfam" id="TIGR00997">
    <property type="entry name" value="ispZ"/>
    <property type="match status" value="1"/>
</dbReference>
<dbReference type="NCBIfam" id="NF001324">
    <property type="entry name" value="PRK00259.1-2"/>
    <property type="match status" value="1"/>
</dbReference>
<dbReference type="NCBIfam" id="NF001325">
    <property type="entry name" value="PRK00259.1-3"/>
    <property type="match status" value="1"/>
</dbReference>
<dbReference type="NCBIfam" id="NF001326">
    <property type="entry name" value="PRK00259.1-4"/>
    <property type="match status" value="1"/>
</dbReference>
<dbReference type="PANTHER" id="PTHR36917:SF1">
    <property type="entry name" value="INNER MEMBRANE-SPANNING PROTEIN YCIB"/>
    <property type="match status" value="1"/>
</dbReference>
<dbReference type="PANTHER" id="PTHR36917">
    <property type="entry name" value="INTRACELLULAR SEPTATION PROTEIN A-RELATED"/>
    <property type="match status" value="1"/>
</dbReference>
<dbReference type="Pfam" id="PF04279">
    <property type="entry name" value="IspA"/>
    <property type="match status" value="1"/>
</dbReference>
<evidence type="ECO:0000255" key="1">
    <source>
        <dbReference type="HAMAP-Rule" id="MF_00189"/>
    </source>
</evidence>
<protein>
    <recommendedName>
        <fullName evidence="1">Inner membrane-spanning protein YciB</fullName>
    </recommendedName>
</protein>
<accession>Q1C7Q1</accession>
<sequence length="180" mass="20875">MKQLLDFLPLVVFFIFYKMYDIFVASGALIVATLVALAFTWLKYRKVEKMTLVTAAMVLVFGTLTLAFHSDLFIKWKVTVLYVLFALALLVSQWVMKKPLIQRMLGKELTLPDKVWSTLNLSWAIFFLVCGLLNIYVAFWLPQDIWVNFKVFGLTALTLIFTLISGVYIYRHMPEEQKKS</sequence>
<comment type="function">
    <text evidence="1">Plays a role in cell envelope biogenesis, maintenance of cell envelope integrity and membrane homeostasis.</text>
</comment>
<comment type="subcellular location">
    <subcellularLocation>
        <location evidence="1">Cell inner membrane</location>
        <topology evidence="1">Multi-pass membrane protein</topology>
    </subcellularLocation>
</comment>
<comment type="similarity">
    <text evidence="1">Belongs to the YciB family.</text>
</comment>
<organism>
    <name type="scientific">Yersinia pestis bv. Antiqua (strain Antiqua)</name>
    <dbReference type="NCBI Taxonomy" id="360102"/>
    <lineage>
        <taxon>Bacteria</taxon>
        <taxon>Pseudomonadati</taxon>
        <taxon>Pseudomonadota</taxon>
        <taxon>Gammaproteobacteria</taxon>
        <taxon>Enterobacterales</taxon>
        <taxon>Yersiniaceae</taxon>
        <taxon>Yersinia</taxon>
    </lineage>
</organism>
<proteinExistence type="inferred from homology"/>
<keyword id="KW-0997">Cell inner membrane</keyword>
<keyword id="KW-1003">Cell membrane</keyword>
<keyword id="KW-0472">Membrane</keyword>
<keyword id="KW-0812">Transmembrane</keyword>
<keyword id="KW-1133">Transmembrane helix</keyword>
<feature type="chain" id="PRO_1000021075" description="Inner membrane-spanning protein YciB">
    <location>
        <begin position="1"/>
        <end position="180"/>
    </location>
</feature>
<feature type="transmembrane region" description="Helical" evidence="1">
    <location>
        <begin position="22"/>
        <end position="42"/>
    </location>
</feature>
<feature type="transmembrane region" description="Helical" evidence="1">
    <location>
        <begin position="50"/>
        <end position="70"/>
    </location>
</feature>
<feature type="transmembrane region" description="Helical" evidence="1">
    <location>
        <begin position="72"/>
        <end position="92"/>
    </location>
</feature>
<feature type="transmembrane region" description="Helical" evidence="1">
    <location>
        <begin position="121"/>
        <end position="141"/>
    </location>
</feature>
<feature type="transmembrane region" description="Helical" evidence="1">
    <location>
        <begin position="149"/>
        <end position="169"/>
    </location>
</feature>
<name>YCIB_YERPA</name>